<organism>
    <name type="scientific">Arabidopsis thaliana</name>
    <name type="common">Mouse-ear cress</name>
    <dbReference type="NCBI Taxonomy" id="3702"/>
    <lineage>
        <taxon>Eukaryota</taxon>
        <taxon>Viridiplantae</taxon>
        <taxon>Streptophyta</taxon>
        <taxon>Embryophyta</taxon>
        <taxon>Tracheophyta</taxon>
        <taxon>Spermatophyta</taxon>
        <taxon>Magnoliopsida</taxon>
        <taxon>eudicotyledons</taxon>
        <taxon>Gunneridae</taxon>
        <taxon>Pentapetalae</taxon>
        <taxon>rosids</taxon>
        <taxon>malvids</taxon>
        <taxon>Brassicales</taxon>
        <taxon>Brassicaceae</taxon>
        <taxon>Camelineae</taxon>
        <taxon>Arabidopsis</taxon>
    </lineage>
</organism>
<protein>
    <recommendedName>
        <fullName>NADP-dependent glyceraldehyde-3-phosphate dehydrogenase</fullName>
        <ecNumber>1.2.1.9</ecNumber>
    </recommendedName>
    <alternativeName>
        <fullName>Aldehyde dehydrogenase family 11 member A3</fullName>
    </alternativeName>
    <alternativeName>
        <fullName>Glyceraldehyde-3-phosphate dehydrogenase [NADP(+)]</fullName>
    </alternativeName>
    <alternativeName>
        <fullName>Non-phosphorylating glyceraldehyde 3-phosphate dehydrogenase</fullName>
    </alternativeName>
    <alternativeName>
        <fullName>Triosephosphate dehydrogenase</fullName>
    </alternativeName>
</protein>
<gene>
    <name type="primary">ALDH11A3</name>
    <name type="synonym">GAPN</name>
    <name type="ordered locus">At2g24270</name>
    <name type="ORF">F27D4.18</name>
</gene>
<sequence length="496" mass="53060">MAGTGLFAEILDGEVYKYYADGEWKTSSSGKSVAIMNPATRKTQYKVQACTQEEVNAVMELAKSAQKSWAKTPLWKRAELLHKAAAILKDNKAPMAESLVKEIAKPAKDSVTEVVRSGDLISYCAEEGVRILGEGKFLLSDSFPGNDRTKYCLTSKIPLGVVLAIPPFNYPVNLAVSKIAPALIAGNSLVLKPPTQGAVSCLHMVHCFHLAGFPKGLISCITGKGSEIGDFLTMHPAVNCISFTGGDTGISISKKAGMIPLQMELGGKDACIVLDDADLDLVASNIIKGGFSYSGQRCTAVKVVLVMESVADELVEKVKAKVAKLTVGPPEENSDITAVVSESSANFIEGLVMDAKEKGATFCQEYKREGNLIWPLLLDNVRPDMRIAWEEPFGPVVPVLRINSVEEGINHCNASNFGLQGCVFTKDINKAILISDAMETGTVQINSAPARGPDHFPFQGLKDSGIGSQGVTNSINLMTKVKTTVINLPTPSYSMG</sequence>
<comment type="function">
    <text>Important as a means of generating NADPH for biosynthetic reactions.</text>
</comment>
<comment type="catalytic activity">
    <reaction>
        <text>D-glyceraldehyde 3-phosphate + NADP(+) + H2O = (2R)-3-phosphoglycerate + NADPH + 2 H(+)</text>
        <dbReference type="Rhea" id="RHEA:14669"/>
        <dbReference type="ChEBI" id="CHEBI:15377"/>
        <dbReference type="ChEBI" id="CHEBI:15378"/>
        <dbReference type="ChEBI" id="CHEBI:57783"/>
        <dbReference type="ChEBI" id="CHEBI:58272"/>
        <dbReference type="ChEBI" id="CHEBI:58349"/>
        <dbReference type="ChEBI" id="CHEBI:59776"/>
        <dbReference type="EC" id="1.2.1.9"/>
    </reaction>
</comment>
<comment type="subcellular location">
    <subcellularLocation>
        <location>Cytoplasm</location>
    </subcellularLocation>
</comment>
<comment type="alternative products">
    <event type="alternative splicing"/>
    <isoform>
        <id>Q1WIQ6-1</id>
        <name>1</name>
        <sequence type="displayed"/>
    </isoform>
    <text>A number of isoforms are produced. According to EST sequences.</text>
</comment>
<comment type="similarity">
    <text evidence="4">Belongs to the aldehyde dehydrogenase family.</text>
</comment>
<accession>Q1WIQ6</accession>
<accession>Q9ZUG8</accession>
<evidence type="ECO:0000250" key="1"/>
<evidence type="ECO:0000255" key="2">
    <source>
        <dbReference type="PROSITE-ProRule" id="PRU10007"/>
    </source>
</evidence>
<evidence type="ECO:0000255" key="3">
    <source>
        <dbReference type="PROSITE-ProRule" id="PRU10008"/>
    </source>
</evidence>
<evidence type="ECO:0000305" key="4"/>
<evidence type="ECO:0007744" key="5">
    <source>
    </source>
</evidence>
<evidence type="ECO:0007744" key="6">
    <source>
    </source>
</evidence>
<feature type="initiator methionine" description="Removed" evidence="6">
    <location>
        <position position="1"/>
    </location>
</feature>
<feature type="chain" id="PRO_0000256066" description="NADP-dependent glyceraldehyde-3-phosphate dehydrogenase">
    <location>
        <begin position="2"/>
        <end position="496"/>
    </location>
</feature>
<feature type="active site" description="Proton acceptor" evidence="2 3">
    <location>
        <position position="264"/>
    </location>
</feature>
<feature type="active site" description="Nucleophile" evidence="2 3">
    <location>
        <position position="298"/>
    </location>
</feature>
<feature type="binding site" evidence="1">
    <location>
        <position position="116"/>
    </location>
    <ligand>
        <name>substrate</name>
    </ligand>
</feature>
<feature type="binding site" evidence="1">
    <location>
        <begin position="169"/>
        <end position="170"/>
    </location>
    <ligand>
        <name>substrate</name>
    </ligand>
</feature>
<feature type="binding site" evidence="1">
    <location>
        <position position="192"/>
    </location>
    <ligand>
        <name>NADP(+)</name>
        <dbReference type="ChEBI" id="CHEBI:58349"/>
    </ligand>
</feature>
<feature type="binding site" evidence="1">
    <location>
        <position position="195"/>
    </location>
    <ligand>
        <name>NADP(+)</name>
        <dbReference type="ChEBI" id="CHEBI:58349"/>
    </ligand>
</feature>
<feature type="binding site" evidence="1">
    <location>
        <position position="230"/>
    </location>
    <ligand>
        <name>NADP(+)</name>
        <dbReference type="ChEBI" id="CHEBI:58349"/>
    </ligand>
</feature>
<feature type="binding site" evidence="1">
    <location>
        <begin position="245"/>
        <end position="249"/>
    </location>
    <ligand>
        <name>NAD(+)</name>
        <dbReference type="ChEBI" id="CHEBI:57540"/>
    </ligand>
</feature>
<feature type="binding site" evidence="1">
    <location>
        <begin position="297"/>
        <end position="299"/>
    </location>
    <ligand>
        <name>substrate</name>
    </ligand>
</feature>
<feature type="binding site" evidence="1">
    <location>
        <position position="391"/>
    </location>
    <ligand>
        <name>NADP(+)</name>
        <dbReference type="ChEBI" id="CHEBI:58349"/>
    </ligand>
</feature>
<feature type="binding site" evidence="1">
    <location>
        <position position="451"/>
    </location>
    <ligand>
        <name>substrate</name>
    </ligand>
</feature>
<feature type="site" description="Transition state stabilizer" evidence="1">
    <location>
        <position position="169"/>
    </location>
</feature>
<feature type="modified residue" description="N-acetylalanine" evidence="6">
    <location>
        <position position="2"/>
    </location>
</feature>
<feature type="modified residue" description="Phosphothreonine" evidence="5">
    <location>
        <position position="4"/>
    </location>
</feature>
<feature type="sequence conflict" description="In Ref. 1; ABB83822." evidence="4" ref="1">
    <original>V</original>
    <variation>A</variation>
    <location>
        <position position="47"/>
    </location>
</feature>
<feature type="sequence conflict" description="In Ref. 1; ABB83822." evidence="4" ref="1">
    <original>N</original>
    <variation>Y</variation>
    <location>
        <position position="56"/>
    </location>
</feature>
<keyword id="KW-0007">Acetylation</keyword>
<keyword id="KW-0025">Alternative splicing</keyword>
<keyword id="KW-0963">Cytoplasm</keyword>
<keyword id="KW-0521">NADP</keyword>
<keyword id="KW-0560">Oxidoreductase</keyword>
<keyword id="KW-0597">Phosphoprotein</keyword>
<keyword id="KW-1185">Reference proteome</keyword>
<proteinExistence type="evidence at protein level"/>
<name>GAPN_ARATH</name>
<dbReference type="EC" id="1.2.1.9"/>
<dbReference type="EMBL" id="DQ268762">
    <property type="protein sequence ID" value="ABB83822.1"/>
    <property type="molecule type" value="mRNA"/>
</dbReference>
<dbReference type="EMBL" id="AC005967">
    <property type="protein sequence ID" value="AAD03388.1"/>
    <property type="molecule type" value="Genomic_DNA"/>
</dbReference>
<dbReference type="EMBL" id="CP002685">
    <property type="protein sequence ID" value="AEC07553.1"/>
    <property type="molecule type" value="Genomic_DNA"/>
</dbReference>
<dbReference type="EMBL" id="CP002685">
    <property type="protein sequence ID" value="AEC07554.1"/>
    <property type="molecule type" value="Genomic_DNA"/>
</dbReference>
<dbReference type="EMBL" id="AY037205">
    <property type="protein sequence ID" value="AAK59790.1"/>
    <property type="molecule type" value="mRNA"/>
</dbReference>
<dbReference type="EMBL" id="AY136409">
    <property type="protein sequence ID" value="AAM97075.1"/>
    <property type="molecule type" value="mRNA"/>
</dbReference>
<dbReference type="EMBL" id="BT004551">
    <property type="protein sequence ID" value="AAO42797.1"/>
    <property type="molecule type" value="mRNA"/>
</dbReference>
<dbReference type="PIR" id="F84634">
    <property type="entry name" value="F84634"/>
</dbReference>
<dbReference type="RefSeq" id="NP_001189589.1">
    <molecule id="Q1WIQ6-1"/>
    <property type="nucleotide sequence ID" value="NM_001202660.1"/>
</dbReference>
<dbReference type="RefSeq" id="NP_180004.1">
    <molecule id="Q1WIQ6-1"/>
    <property type="nucleotide sequence ID" value="NM_127989.4"/>
</dbReference>
<dbReference type="SMR" id="Q1WIQ6"/>
<dbReference type="BioGRID" id="2314">
    <property type="interactions" value="5"/>
</dbReference>
<dbReference type="FunCoup" id="Q1WIQ6">
    <property type="interactions" value="615"/>
</dbReference>
<dbReference type="IntAct" id="Q1WIQ6">
    <property type="interactions" value="1"/>
</dbReference>
<dbReference type="STRING" id="3702.Q1WIQ6"/>
<dbReference type="iPTMnet" id="Q1WIQ6"/>
<dbReference type="PaxDb" id="3702-AT2G24270.4"/>
<dbReference type="ProteomicsDB" id="248603">
    <molecule id="Q1WIQ6-1"/>
</dbReference>
<dbReference type="EnsemblPlants" id="AT2G24270.1">
    <molecule id="Q1WIQ6-1"/>
    <property type="protein sequence ID" value="AT2G24270.1"/>
    <property type="gene ID" value="AT2G24270"/>
</dbReference>
<dbReference type="EnsemblPlants" id="AT2G24270.3">
    <molecule id="Q1WIQ6-1"/>
    <property type="protein sequence ID" value="AT2G24270.3"/>
    <property type="gene ID" value="AT2G24270"/>
</dbReference>
<dbReference type="GeneID" id="816962"/>
<dbReference type="Gramene" id="AT2G24270.1">
    <molecule id="Q1WIQ6-1"/>
    <property type="protein sequence ID" value="AT2G24270.1"/>
    <property type="gene ID" value="AT2G24270"/>
</dbReference>
<dbReference type="Gramene" id="AT2G24270.3">
    <molecule id="Q1WIQ6-1"/>
    <property type="protein sequence ID" value="AT2G24270.3"/>
    <property type="gene ID" value="AT2G24270"/>
</dbReference>
<dbReference type="KEGG" id="ath:AT2G24270"/>
<dbReference type="Araport" id="AT2G24270"/>
<dbReference type="TAIR" id="AT2G24270">
    <property type="gene designation" value="ALDH11A3"/>
</dbReference>
<dbReference type="eggNOG" id="KOG2450">
    <property type="taxonomic scope" value="Eukaryota"/>
</dbReference>
<dbReference type="HOGENOM" id="CLU_005391_1_0_1"/>
<dbReference type="InParanoid" id="Q1WIQ6"/>
<dbReference type="OrthoDB" id="310895at2759"/>
<dbReference type="PhylomeDB" id="Q1WIQ6"/>
<dbReference type="BioCyc" id="ARA:AT2G24270-MONOMER"/>
<dbReference type="BioCyc" id="MetaCyc:AT2G24270-MONOMER"/>
<dbReference type="PRO" id="PR:Q1WIQ6"/>
<dbReference type="Proteomes" id="UP000006548">
    <property type="component" value="Chromosome 2"/>
</dbReference>
<dbReference type="ExpressionAtlas" id="Q1WIQ6">
    <property type="expression patterns" value="baseline and differential"/>
</dbReference>
<dbReference type="GO" id="GO:0005737">
    <property type="term" value="C:cytoplasm"/>
    <property type="evidence" value="ECO:0007669"/>
    <property type="project" value="UniProtKB-SubCell"/>
</dbReference>
<dbReference type="GO" id="GO:0008886">
    <property type="term" value="F:glyceraldehyde-3-phosphate dehydrogenase (NADP+) (non-phosphorylating) activity"/>
    <property type="evidence" value="ECO:0007669"/>
    <property type="project" value="UniProtKB-EC"/>
</dbReference>
<dbReference type="CDD" id="cd07082">
    <property type="entry name" value="ALDH_F11_NP-GAPDH"/>
    <property type="match status" value="1"/>
</dbReference>
<dbReference type="FunFam" id="3.40.309.10:FF:000016">
    <property type="entry name" value="NADP-dependent glyceraldehyde-3-phosphate dehydrogenase"/>
    <property type="match status" value="1"/>
</dbReference>
<dbReference type="FunFam" id="3.40.605.10:FF:000013">
    <property type="entry name" value="NADP-dependent glyceraldehyde-3-phosphate dehydrogenase"/>
    <property type="match status" value="1"/>
</dbReference>
<dbReference type="Gene3D" id="3.40.605.10">
    <property type="entry name" value="Aldehyde Dehydrogenase, Chain A, domain 1"/>
    <property type="match status" value="1"/>
</dbReference>
<dbReference type="Gene3D" id="3.40.309.10">
    <property type="entry name" value="Aldehyde Dehydrogenase, Chain A, domain 2"/>
    <property type="match status" value="1"/>
</dbReference>
<dbReference type="InterPro" id="IPR016161">
    <property type="entry name" value="Ald_DH/histidinol_DH"/>
</dbReference>
<dbReference type="InterPro" id="IPR016163">
    <property type="entry name" value="Ald_DH_C"/>
</dbReference>
<dbReference type="InterPro" id="IPR016160">
    <property type="entry name" value="Ald_DH_CS_CYS"/>
</dbReference>
<dbReference type="InterPro" id="IPR029510">
    <property type="entry name" value="Ald_DH_CS_GLU"/>
</dbReference>
<dbReference type="InterPro" id="IPR016162">
    <property type="entry name" value="Ald_DH_N"/>
</dbReference>
<dbReference type="InterPro" id="IPR015590">
    <property type="entry name" value="Aldehyde_DH_dom"/>
</dbReference>
<dbReference type="InterPro" id="IPR051020">
    <property type="entry name" value="ALDH-related_metabolic_enz"/>
</dbReference>
<dbReference type="PANTHER" id="PTHR42991">
    <property type="entry name" value="ALDEHYDE DEHYDROGENASE"/>
    <property type="match status" value="1"/>
</dbReference>
<dbReference type="PANTHER" id="PTHR42991:SF1">
    <property type="entry name" value="ALDEHYDE DEHYDROGENASE"/>
    <property type="match status" value="1"/>
</dbReference>
<dbReference type="Pfam" id="PF00171">
    <property type="entry name" value="Aldedh"/>
    <property type="match status" value="1"/>
</dbReference>
<dbReference type="SUPFAM" id="SSF53720">
    <property type="entry name" value="ALDH-like"/>
    <property type="match status" value="1"/>
</dbReference>
<dbReference type="PROSITE" id="PS00070">
    <property type="entry name" value="ALDEHYDE_DEHYDR_CYS"/>
    <property type="match status" value="1"/>
</dbReference>
<dbReference type="PROSITE" id="PS00687">
    <property type="entry name" value="ALDEHYDE_DEHYDR_GLU"/>
    <property type="match status" value="1"/>
</dbReference>
<reference key="1">
    <citation type="submission" date="2005-10" db="EMBL/GenBank/DDBJ databases">
        <authorList>
            <person name="Rius S.P."/>
            <person name="Iglesias A.A."/>
            <person name="Gomez-Casati D.F."/>
        </authorList>
    </citation>
    <scope>NUCLEOTIDE SEQUENCE [MRNA]</scope>
    <source>
        <strain>cv. Columbia</strain>
    </source>
</reference>
<reference key="2">
    <citation type="journal article" date="1999" name="Nature">
        <title>Sequence and analysis of chromosome 2 of the plant Arabidopsis thaliana.</title>
        <authorList>
            <person name="Lin X."/>
            <person name="Kaul S."/>
            <person name="Rounsley S.D."/>
            <person name="Shea T.P."/>
            <person name="Benito M.-I."/>
            <person name="Town C.D."/>
            <person name="Fujii C.Y."/>
            <person name="Mason T.M."/>
            <person name="Bowman C.L."/>
            <person name="Barnstead M.E."/>
            <person name="Feldblyum T.V."/>
            <person name="Buell C.R."/>
            <person name="Ketchum K.A."/>
            <person name="Lee J.J."/>
            <person name="Ronning C.M."/>
            <person name="Koo H.L."/>
            <person name="Moffat K.S."/>
            <person name="Cronin L.A."/>
            <person name="Shen M."/>
            <person name="Pai G."/>
            <person name="Van Aken S."/>
            <person name="Umayam L."/>
            <person name="Tallon L.J."/>
            <person name="Gill J.E."/>
            <person name="Adams M.D."/>
            <person name="Carrera A.J."/>
            <person name="Creasy T.H."/>
            <person name="Goodman H.M."/>
            <person name="Somerville C.R."/>
            <person name="Copenhaver G.P."/>
            <person name="Preuss D."/>
            <person name="Nierman W.C."/>
            <person name="White O."/>
            <person name="Eisen J.A."/>
            <person name="Salzberg S.L."/>
            <person name="Fraser C.M."/>
            <person name="Venter J.C."/>
        </authorList>
    </citation>
    <scope>NUCLEOTIDE SEQUENCE [LARGE SCALE GENOMIC DNA]</scope>
    <source>
        <strain>cv. Columbia</strain>
    </source>
</reference>
<reference key="3">
    <citation type="journal article" date="2017" name="Plant J.">
        <title>Araport11: a complete reannotation of the Arabidopsis thaliana reference genome.</title>
        <authorList>
            <person name="Cheng C.Y."/>
            <person name="Krishnakumar V."/>
            <person name="Chan A.P."/>
            <person name="Thibaud-Nissen F."/>
            <person name="Schobel S."/>
            <person name="Town C.D."/>
        </authorList>
    </citation>
    <scope>GENOME REANNOTATION</scope>
    <source>
        <strain>cv. Columbia</strain>
    </source>
</reference>
<reference key="4">
    <citation type="journal article" date="2003" name="Science">
        <title>Empirical analysis of transcriptional activity in the Arabidopsis genome.</title>
        <authorList>
            <person name="Yamada K."/>
            <person name="Lim J."/>
            <person name="Dale J.M."/>
            <person name="Chen H."/>
            <person name="Shinn P."/>
            <person name="Palm C.J."/>
            <person name="Southwick A.M."/>
            <person name="Wu H.C."/>
            <person name="Kim C.J."/>
            <person name="Nguyen M."/>
            <person name="Pham P.K."/>
            <person name="Cheuk R.F."/>
            <person name="Karlin-Newmann G."/>
            <person name="Liu S.X."/>
            <person name="Lam B."/>
            <person name="Sakano H."/>
            <person name="Wu T."/>
            <person name="Yu G."/>
            <person name="Miranda M."/>
            <person name="Quach H.L."/>
            <person name="Tripp M."/>
            <person name="Chang C.H."/>
            <person name="Lee J.M."/>
            <person name="Toriumi M.J."/>
            <person name="Chan M.M."/>
            <person name="Tang C.C."/>
            <person name="Onodera C.S."/>
            <person name="Deng J.M."/>
            <person name="Akiyama K."/>
            <person name="Ansari Y."/>
            <person name="Arakawa T."/>
            <person name="Banh J."/>
            <person name="Banno F."/>
            <person name="Bowser L."/>
            <person name="Brooks S.Y."/>
            <person name="Carninci P."/>
            <person name="Chao Q."/>
            <person name="Choy N."/>
            <person name="Enju A."/>
            <person name="Goldsmith A.D."/>
            <person name="Gurjal M."/>
            <person name="Hansen N.F."/>
            <person name="Hayashizaki Y."/>
            <person name="Johnson-Hopson C."/>
            <person name="Hsuan V.W."/>
            <person name="Iida K."/>
            <person name="Karnes M."/>
            <person name="Khan S."/>
            <person name="Koesema E."/>
            <person name="Ishida J."/>
            <person name="Jiang P.X."/>
            <person name="Jones T."/>
            <person name="Kawai J."/>
            <person name="Kamiya A."/>
            <person name="Meyers C."/>
            <person name="Nakajima M."/>
            <person name="Narusaka M."/>
            <person name="Seki M."/>
            <person name="Sakurai T."/>
            <person name="Satou M."/>
            <person name="Tamse R."/>
            <person name="Vaysberg M."/>
            <person name="Wallender E.K."/>
            <person name="Wong C."/>
            <person name="Yamamura Y."/>
            <person name="Yuan S."/>
            <person name="Shinozaki K."/>
            <person name="Davis R.W."/>
            <person name="Theologis A."/>
            <person name="Ecker J.R."/>
        </authorList>
    </citation>
    <scope>NUCLEOTIDE SEQUENCE [LARGE SCALE MRNA]</scope>
    <source>
        <strain>cv. Columbia</strain>
    </source>
</reference>
<reference key="5">
    <citation type="journal article" date="2004" name="Trends Plant Sci.">
        <title>The ALDH gene superfamily of Arabidopsis.</title>
        <authorList>
            <person name="Kirch H.-H."/>
            <person name="Bartels D."/>
            <person name="Wei Y."/>
            <person name="Schnable P.S."/>
            <person name="Wood A.J."/>
        </authorList>
    </citation>
    <scope>NOMENCLATURE</scope>
</reference>
<reference key="6">
    <citation type="journal article" date="2009" name="Plant Physiol.">
        <title>Large-scale Arabidopsis phosphoproteome profiling reveals novel chloroplast kinase substrates and phosphorylation networks.</title>
        <authorList>
            <person name="Reiland S."/>
            <person name="Messerli G."/>
            <person name="Baerenfaller K."/>
            <person name="Gerrits B."/>
            <person name="Endler A."/>
            <person name="Grossmann J."/>
            <person name="Gruissem W."/>
            <person name="Baginsky S."/>
        </authorList>
    </citation>
    <scope>PHOSPHORYLATION [LARGE SCALE ANALYSIS] AT THR-4</scope>
    <scope>IDENTIFICATION BY MASS SPECTROMETRY [LARGE SCALE ANALYSIS]</scope>
</reference>
<reference key="7">
    <citation type="journal article" date="2012" name="Mol. Cell. Proteomics">
        <title>Comparative large-scale characterisation of plant vs. mammal proteins reveals similar and idiosyncratic N-alpha acetylation features.</title>
        <authorList>
            <person name="Bienvenut W.V."/>
            <person name="Sumpton D."/>
            <person name="Martinez A."/>
            <person name="Lilla S."/>
            <person name="Espagne C."/>
            <person name="Meinnel T."/>
            <person name="Giglione C."/>
        </authorList>
    </citation>
    <scope>ACETYLATION [LARGE SCALE ANALYSIS] AT ALA-2</scope>
    <scope>CLEAVAGE OF INITIATOR METHIONINE [LARGE SCALE ANALYSIS]</scope>
    <scope>IDENTIFICATION BY MASS SPECTROMETRY [LARGE SCALE ANALYSIS]</scope>
</reference>